<gene>
    <name evidence="1" type="primary">ileS</name>
    <name type="ordered locus">CKL_3752</name>
</gene>
<keyword id="KW-0030">Aminoacyl-tRNA synthetase</keyword>
<keyword id="KW-0067">ATP-binding</keyword>
<keyword id="KW-0963">Cytoplasm</keyword>
<keyword id="KW-0436">Ligase</keyword>
<keyword id="KW-0479">Metal-binding</keyword>
<keyword id="KW-0547">Nucleotide-binding</keyword>
<keyword id="KW-0648">Protein biosynthesis</keyword>
<keyword id="KW-1185">Reference proteome</keyword>
<keyword id="KW-0862">Zinc</keyword>
<protein>
    <recommendedName>
        <fullName evidence="1">Isoleucine--tRNA ligase</fullName>
        <ecNumber evidence="1">6.1.1.5</ecNumber>
    </recommendedName>
    <alternativeName>
        <fullName evidence="1">Isoleucyl-tRNA synthetase</fullName>
        <shortName evidence="1">IleRS</shortName>
    </alternativeName>
</protein>
<proteinExistence type="inferred from homology"/>
<comment type="function">
    <text evidence="1">Catalyzes the attachment of isoleucine to tRNA(Ile). As IleRS can inadvertently accommodate and process structurally similar amino acids such as valine, to avoid such errors it has two additional distinct tRNA(Ile)-dependent editing activities. One activity is designated as 'pretransfer' editing and involves the hydrolysis of activated Val-AMP. The other activity is designated 'posttransfer' editing and involves deacylation of mischarged Val-tRNA(Ile).</text>
</comment>
<comment type="catalytic activity">
    <reaction evidence="1">
        <text>tRNA(Ile) + L-isoleucine + ATP = L-isoleucyl-tRNA(Ile) + AMP + diphosphate</text>
        <dbReference type="Rhea" id="RHEA:11060"/>
        <dbReference type="Rhea" id="RHEA-COMP:9666"/>
        <dbReference type="Rhea" id="RHEA-COMP:9695"/>
        <dbReference type="ChEBI" id="CHEBI:30616"/>
        <dbReference type="ChEBI" id="CHEBI:33019"/>
        <dbReference type="ChEBI" id="CHEBI:58045"/>
        <dbReference type="ChEBI" id="CHEBI:78442"/>
        <dbReference type="ChEBI" id="CHEBI:78528"/>
        <dbReference type="ChEBI" id="CHEBI:456215"/>
        <dbReference type="EC" id="6.1.1.5"/>
    </reaction>
</comment>
<comment type="cofactor">
    <cofactor evidence="1">
        <name>Zn(2+)</name>
        <dbReference type="ChEBI" id="CHEBI:29105"/>
    </cofactor>
</comment>
<comment type="subunit">
    <text evidence="1">Monomer.</text>
</comment>
<comment type="subcellular location">
    <subcellularLocation>
        <location evidence="1">Cytoplasm</location>
    </subcellularLocation>
</comment>
<comment type="domain">
    <text evidence="1">IleRS has two distinct active sites: one for aminoacylation and one for editing. The misactivated valine is translocated from the active site to the editing site, which sterically excludes the correctly activated isoleucine. The single editing site contains two valyl binding pockets, one specific for each substrate (Val-AMP or Val-tRNA(Ile)).</text>
</comment>
<comment type="similarity">
    <text evidence="1">Belongs to the class-I aminoacyl-tRNA synthetase family. IleS type 2 subfamily.</text>
</comment>
<evidence type="ECO:0000255" key="1">
    <source>
        <dbReference type="HAMAP-Rule" id="MF_02003"/>
    </source>
</evidence>
<reference key="1">
    <citation type="journal article" date="2008" name="Proc. Natl. Acad. Sci. U.S.A.">
        <title>The genome of Clostridium kluyveri, a strict anaerobe with unique metabolic features.</title>
        <authorList>
            <person name="Seedorf H."/>
            <person name="Fricke W.F."/>
            <person name="Veith B."/>
            <person name="Brueggemann H."/>
            <person name="Liesegang H."/>
            <person name="Strittmatter A."/>
            <person name="Miethke M."/>
            <person name="Buckel W."/>
            <person name="Hinderberger J."/>
            <person name="Li F."/>
            <person name="Hagemeier C."/>
            <person name="Thauer R.K."/>
            <person name="Gottschalk G."/>
        </authorList>
    </citation>
    <scope>NUCLEOTIDE SEQUENCE [LARGE SCALE GENOMIC DNA]</scope>
    <source>
        <strain>ATCC 8527 / DSM 555 / NBRC 12016 / NCIMB 10680 / K1</strain>
    </source>
</reference>
<sequence>MYKKIDNNKSFVQMEKDILKLWQDRKVVEKSFNSNKDGEYFTFYDGPPTANGKPHIGHVLTRVIKDLIPRYKVMKGYKVLRKAGWDTHGLPVELEVEKSLGISGKPQIEKYGVEDFIKKCKDSVFTYVSQWRKMSDRIGFWVDMDDPYVTYDNHYIESEWWALKQIWDKNLLYKGHKIVPYCPRCGTALSSHEVSQGYKDVKETSVYVKFKIKNEDKYILAWTTTPWTLPNNMALTINKSYDYVEVINDGEHLILAEGLLEKLEGEYEVVKKFKGEEMLGIEYEPMFNFTPFEGKAHYVVHGDYVTLTDGTGIVHTAPAFGEDDSITCIKHNIPMINSVTTQGKFKDEVTPWKGLFVKDADPKIIAYLKEKDILYKAEKFTHSYPFCWRCDTTLLYYPRDTWFIRMSAMRDKLIRNTNDTNWYPDNIRTGRFGKFVEGVIDWGLSRERYWGTPLPIWECECGHRECIGSIKELREKGINVPDDIELHKPYIDGVKLKCDKCHKEMERVPEVIDCWFDSGSMPFAQHHYPFENRELFEKNFPAQFISEAVDQTRGWFYTLMAISTVLFDKSSFENCLVLGHVLDKHGLKMSKHKGNVLSPEVVLENEGADATRWYFYTESAPWLPSRFYEEAVQDSQRKFLGTLWNVYSFYVLYADLDKFNPLEYSHFVSENVMDKWVISRLNSLIKITEGNLDNYRITQAAESIGNFVDELSNWYVRRNRTRFWNEELAEDKVGAYVTLYNVLNKLCLIAAPFVPFMTEEIYQNLVLSLNKNVPESIHLCKWPEYDLNLVDSDLEKNMEECYKIVKLGRSARNAANIKNRQPLSEMLISVKTLPGYYGDIIKSELNIKNIVFNADLSKYVNFNIKPNLPVLGKKYGRMIPKIKQSISSMNQMDLAGKINNNEVVKIKIDETEIELNSENLLITMEGLEGFAFAGEGSTGIVLETTITEELKEEGNLREILSKIQNMRKESGFEVADKIKLYVSDNEKLEEVVKKFEAQIKKETLAVEVAYNENREYSGCNINGEKFNIAVEVLK</sequence>
<organism>
    <name type="scientific">Clostridium kluyveri (strain ATCC 8527 / DSM 555 / NBRC 12016 / NCIMB 10680 / K1)</name>
    <dbReference type="NCBI Taxonomy" id="431943"/>
    <lineage>
        <taxon>Bacteria</taxon>
        <taxon>Bacillati</taxon>
        <taxon>Bacillota</taxon>
        <taxon>Clostridia</taxon>
        <taxon>Eubacteriales</taxon>
        <taxon>Clostridiaceae</taxon>
        <taxon>Clostridium</taxon>
    </lineage>
</organism>
<feature type="chain" id="PRO_1000088561" description="Isoleucine--tRNA ligase">
    <location>
        <begin position="1"/>
        <end position="1034"/>
    </location>
</feature>
<feature type="short sequence motif" description="'HIGH' region">
    <location>
        <begin position="48"/>
        <end position="58"/>
    </location>
</feature>
<feature type="short sequence motif" description="'KMSKS' region">
    <location>
        <begin position="588"/>
        <end position="592"/>
    </location>
</feature>
<feature type="binding site" evidence="1">
    <location>
        <position position="591"/>
    </location>
    <ligand>
        <name>ATP</name>
        <dbReference type="ChEBI" id="CHEBI:30616"/>
    </ligand>
</feature>
<dbReference type="EC" id="6.1.1.5" evidence="1"/>
<dbReference type="EMBL" id="CP000673">
    <property type="protein sequence ID" value="EDK35737.1"/>
    <property type="molecule type" value="Genomic_DNA"/>
</dbReference>
<dbReference type="RefSeq" id="WP_012104071.1">
    <property type="nucleotide sequence ID" value="NC_009706.1"/>
</dbReference>
<dbReference type="SMR" id="A5N3P1"/>
<dbReference type="STRING" id="431943.CKL_3752"/>
<dbReference type="KEGG" id="ckl:CKL_3752"/>
<dbReference type="eggNOG" id="COG0060">
    <property type="taxonomic scope" value="Bacteria"/>
</dbReference>
<dbReference type="HOGENOM" id="CLU_001493_1_1_9"/>
<dbReference type="Proteomes" id="UP000002411">
    <property type="component" value="Chromosome"/>
</dbReference>
<dbReference type="GO" id="GO:0005737">
    <property type="term" value="C:cytoplasm"/>
    <property type="evidence" value="ECO:0007669"/>
    <property type="project" value="UniProtKB-SubCell"/>
</dbReference>
<dbReference type="GO" id="GO:0002161">
    <property type="term" value="F:aminoacyl-tRNA deacylase activity"/>
    <property type="evidence" value="ECO:0007669"/>
    <property type="project" value="InterPro"/>
</dbReference>
<dbReference type="GO" id="GO:0005524">
    <property type="term" value="F:ATP binding"/>
    <property type="evidence" value="ECO:0007669"/>
    <property type="project" value="UniProtKB-UniRule"/>
</dbReference>
<dbReference type="GO" id="GO:0004822">
    <property type="term" value="F:isoleucine-tRNA ligase activity"/>
    <property type="evidence" value="ECO:0007669"/>
    <property type="project" value="UniProtKB-UniRule"/>
</dbReference>
<dbReference type="GO" id="GO:0000049">
    <property type="term" value="F:tRNA binding"/>
    <property type="evidence" value="ECO:0007669"/>
    <property type="project" value="InterPro"/>
</dbReference>
<dbReference type="GO" id="GO:0008270">
    <property type="term" value="F:zinc ion binding"/>
    <property type="evidence" value="ECO:0007669"/>
    <property type="project" value="UniProtKB-UniRule"/>
</dbReference>
<dbReference type="GO" id="GO:0006428">
    <property type="term" value="P:isoleucyl-tRNA aminoacylation"/>
    <property type="evidence" value="ECO:0007669"/>
    <property type="project" value="UniProtKB-UniRule"/>
</dbReference>
<dbReference type="CDD" id="cd07961">
    <property type="entry name" value="Anticodon_Ia_Ile_ABEc"/>
    <property type="match status" value="1"/>
</dbReference>
<dbReference type="CDD" id="cd00818">
    <property type="entry name" value="IleRS_core"/>
    <property type="match status" value="1"/>
</dbReference>
<dbReference type="FunFam" id="3.40.50.620:FF:000063">
    <property type="entry name" value="Isoleucine--tRNA ligase"/>
    <property type="match status" value="1"/>
</dbReference>
<dbReference type="FunFam" id="3.40.50.620:FF:000075">
    <property type="entry name" value="Isoleucine--tRNA ligase"/>
    <property type="match status" value="1"/>
</dbReference>
<dbReference type="Gene3D" id="3.40.50.620">
    <property type="entry name" value="HUPs"/>
    <property type="match status" value="2"/>
</dbReference>
<dbReference type="Gene3D" id="1.10.730.10">
    <property type="entry name" value="Isoleucyl-tRNA Synthetase, Domain 1"/>
    <property type="match status" value="1"/>
</dbReference>
<dbReference type="HAMAP" id="MF_02003">
    <property type="entry name" value="Ile_tRNA_synth_type2"/>
    <property type="match status" value="1"/>
</dbReference>
<dbReference type="InterPro" id="IPR001412">
    <property type="entry name" value="aa-tRNA-synth_I_CS"/>
</dbReference>
<dbReference type="InterPro" id="IPR002300">
    <property type="entry name" value="aa-tRNA-synth_Ia"/>
</dbReference>
<dbReference type="InterPro" id="IPR033709">
    <property type="entry name" value="Anticodon_Ile_ABEc"/>
</dbReference>
<dbReference type="InterPro" id="IPR002301">
    <property type="entry name" value="Ile-tRNA-ligase"/>
</dbReference>
<dbReference type="InterPro" id="IPR023586">
    <property type="entry name" value="Ile-tRNA-ligase_type2"/>
</dbReference>
<dbReference type="InterPro" id="IPR013155">
    <property type="entry name" value="M/V/L/I-tRNA-synth_anticd-bd"/>
</dbReference>
<dbReference type="InterPro" id="IPR014729">
    <property type="entry name" value="Rossmann-like_a/b/a_fold"/>
</dbReference>
<dbReference type="InterPro" id="IPR009080">
    <property type="entry name" value="tRNAsynth_Ia_anticodon-bd"/>
</dbReference>
<dbReference type="InterPro" id="IPR009008">
    <property type="entry name" value="Val/Leu/Ile-tRNA-synth_edit"/>
</dbReference>
<dbReference type="NCBIfam" id="TIGR00392">
    <property type="entry name" value="ileS"/>
    <property type="match status" value="1"/>
</dbReference>
<dbReference type="PANTHER" id="PTHR42780:SF1">
    <property type="entry name" value="ISOLEUCINE--TRNA LIGASE, CYTOPLASMIC"/>
    <property type="match status" value="1"/>
</dbReference>
<dbReference type="PANTHER" id="PTHR42780">
    <property type="entry name" value="SOLEUCYL-TRNA SYNTHETASE"/>
    <property type="match status" value="1"/>
</dbReference>
<dbReference type="Pfam" id="PF08264">
    <property type="entry name" value="Anticodon_1"/>
    <property type="match status" value="1"/>
</dbReference>
<dbReference type="Pfam" id="PF19302">
    <property type="entry name" value="DUF5915"/>
    <property type="match status" value="1"/>
</dbReference>
<dbReference type="Pfam" id="PF00133">
    <property type="entry name" value="tRNA-synt_1"/>
    <property type="match status" value="1"/>
</dbReference>
<dbReference type="PRINTS" id="PR00984">
    <property type="entry name" value="TRNASYNTHILE"/>
</dbReference>
<dbReference type="SUPFAM" id="SSF47323">
    <property type="entry name" value="Anticodon-binding domain of a subclass of class I aminoacyl-tRNA synthetases"/>
    <property type="match status" value="2"/>
</dbReference>
<dbReference type="SUPFAM" id="SSF52374">
    <property type="entry name" value="Nucleotidylyl transferase"/>
    <property type="match status" value="1"/>
</dbReference>
<dbReference type="SUPFAM" id="SSF50677">
    <property type="entry name" value="ValRS/IleRS/LeuRS editing domain"/>
    <property type="match status" value="1"/>
</dbReference>
<dbReference type="PROSITE" id="PS00178">
    <property type="entry name" value="AA_TRNA_LIGASE_I"/>
    <property type="match status" value="1"/>
</dbReference>
<accession>A5N3P1</accession>
<name>SYI_CLOK5</name>